<gene>
    <name evidence="1" type="primary">trpD</name>
    <name type="ordered locus">mma_0233</name>
</gene>
<name>TRPD_JANMA</name>
<dbReference type="EC" id="2.4.2.18" evidence="1"/>
<dbReference type="EMBL" id="CP000269">
    <property type="protein sequence ID" value="ABR88741.1"/>
    <property type="molecule type" value="Genomic_DNA"/>
</dbReference>
<dbReference type="RefSeq" id="WP_011979459.1">
    <property type="nucleotide sequence ID" value="NC_009659.1"/>
</dbReference>
<dbReference type="SMR" id="A6SUH6"/>
<dbReference type="STRING" id="375286.mma_0233"/>
<dbReference type="KEGG" id="mms:mma_0233"/>
<dbReference type="eggNOG" id="COG0547">
    <property type="taxonomic scope" value="Bacteria"/>
</dbReference>
<dbReference type="HOGENOM" id="CLU_034315_2_1_4"/>
<dbReference type="OrthoDB" id="9806430at2"/>
<dbReference type="UniPathway" id="UPA00035">
    <property type="reaction ID" value="UER00041"/>
</dbReference>
<dbReference type="Proteomes" id="UP000006388">
    <property type="component" value="Chromosome"/>
</dbReference>
<dbReference type="GO" id="GO:0005829">
    <property type="term" value="C:cytosol"/>
    <property type="evidence" value="ECO:0007669"/>
    <property type="project" value="TreeGrafter"/>
</dbReference>
<dbReference type="GO" id="GO:0004048">
    <property type="term" value="F:anthranilate phosphoribosyltransferase activity"/>
    <property type="evidence" value="ECO:0007669"/>
    <property type="project" value="UniProtKB-UniRule"/>
</dbReference>
<dbReference type="GO" id="GO:0000287">
    <property type="term" value="F:magnesium ion binding"/>
    <property type="evidence" value="ECO:0007669"/>
    <property type="project" value="UniProtKB-UniRule"/>
</dbReference>
<dbReference type="GO" id="GO:0000162">
    <property type="term" value="P:L-tryptophan biosynthetic process"/>
    <property type="evidence" value="ECO:0007669"/>
    <property type="project" value="UniProtKB-UniRule"/>
</dbReference>
<dbReference type="FunFam" id="1.20.970.10:FF:000006">
    <property type="entry name" value="Anthranilate phosphoribosyltransferase"/>
    <property type="match status" value="1"/>
</dbReference>
<dbReference type="FunFam" id="3.40.1030.10:FF:000002">
    <property type="entry name" value="Anthranilate phosphoribosyltransferase"/>
    <property type="match status" value="1"/>
</dbReference>
<dbReference type="Gene3D" id="3.40.1030.10">
    <property type="entry name" value="Nucleoside phosphorylase/phosphoribosyltransferase catalytic domain"/>
    <property type="match status" value="1"/>
</dbReference>
<dbReference type="Gene3D" id="1.20.970.10">
    <property type="entry name" value="Transferase, Pyrimidine Nucleoside Phosphorylase, Chain C"/>
    <property type="match status" value="1"/>
</dbReference>
<dbReference type="HAMAP" id="MF_00211">
    <property type="entry name" value="TrpD"/>
    <property type="match status" value="1"/>
</dbReference>
<dbReference type="InterPro" id="IPR005940">
    <property type="entry name" value="Anthranilate_Pribosyl_Tfrase"/>
</dbReference>
<dbReference type="InterPro" id="IPR000312">
    <property type="entry name" value="Glycosyl_Trfase_fam3"/>
</dbReference>
<dbReference type="InterPro" id="IPR017459">
    <property type="entry name" value="Glycosyl_Trfase_fam3_N_dom"/>
</dbReference>
<dbReference type="InterPro" id="IPR036320">
    <property type="entry name" value="Glycosyl_Trfase_fam3_N_dom_sf"/>
</dbReference>
<dbReference type="InterPro" id="IPR035902">
    <property type="entry name" value="Nuc_phospho_transferase"/>
</dbReference>
<dbReference type="NCBIfam" id="TIGR01245">
    <property type="entry name" value="trpD"/>
    <property type="match status" value="1"/>
</dbReference>
<dbReference type="PANTHER" id="PTHR43285">
    <property type="entry name" value="ANTHRANILATE PHOSPHORIBOSYLTRANSFERASE"/>
    <property type="match status" value="1"/>
</dbReference>
<dbReference type="PANTHER" id="PTHR43285:SF2">
    <property type="entry name" value="ANTHRANILATE PHOSPHORIBOSYLTRANSFERASE"/>
    <property type="match status" value="1"/>
</dbReference>
<dbReference type="Pfam" id="PF02885">
    <property type="entry name" value="Glycos_trans_3N"/>
    <property type="match status" value="1"/>
</dbReference>
<dbReference type="Pfam" id="PF00591">
    <property type="entry name" value="Glycos_transf_3"/>
    <property type="match status" value="1"/>
</dbReference>
<dbReference type="SUPFAM" id="SSF52418">
    <property type="entry name" value="Nucleoside phosphorylase/phosphoribosyltransferase catalytic domain"/>
    <property type="match status" value="1"/>
</dbReference>
<dbReference type="SUPFAM" id="SSF47648">
    <property type="entry name" value="Nucleoside phosphorylase/phosphoribosyltransferase N-terminal domain"/>
    <property type="match status" value="1"/>
</dbReference>
<proteinExistence type="inferred from homology"/>
<protein>
    <recommendedName>
        <fullName evidence="1">Anthranilate phosphoribosyltransferase</fullName>
        <ecNumber evidence="1">2.4.2.18</ecNumber>
    </recommendedName>
</protein>
<sequence>MPITEQEALLRCIDHREIFHDEMLHLFRKIMSGEMSPVMIAALTMGLRVKKESIGEIAAAAQVMREFSTKVPLTDTTNLLDIVGTGGDGANTFNISTASMFVAASAGARIAKHGGRSVSSSSGSADVLESLGANINLKPELVAESIAQTGIGFMFAPNHHAAMKHAAPVRKELGVRTIFNILGPLTNPAGAPNILMGVFHPDLVGIQVRVLQRLGAQHAIVVWGRDNMDEVSLGAATMVGELVNGEIREYEIHPEDFGLQMIASRNLKVANSVESKAKIFEALDNVDSPARDIVALNAGTALYAAGVASSIADGLAKARAAIASGAARAKLEQFVQVTQALGKA</sequence>
<evidence type="ECO:0000255" key="1">
    <source>
        <dbReference type="HAMAP-Rule" id="MF_00211"/>
    </source>
</evidence>
<keyword id="KW-0028">Amino-acid biosynthesis</keyword>
<keyword id="KW-0057">Aromatic amino acid biosynthesis</keyword>
<keyword id="KW-0328">Glycosyltransferase</keyword>
<keyword id="KW-0460">Magnesium</keyword>
<keyword id="KW-0479">Metal-binding</keyword>
<keyword id="KW-0808">Transferase</keyword>
<keyword id="KW-0822">Tryptophan biosynthesis</keyword>
<feature type="chain" id="PRO_1000043017" description="Anthranilate phosphoribosyltransferase">
    <location>
        <begin position="1"/>
        <end position="344"/>
    </location>
</feature>
<feature type="binding site" evidence="1">
    <location>
        <position position="84"/>
    </location>
    <ligand>
        <name>5-phospho-alpha-D-ribose 1-diphosphate</name>
        <dbReference type="ChEBI" id="CHEBI:58017"/>
    </ligand>
</feature>
<feature type="binding site" evidence="1">
    <location>
        <position position="84"/>
    </location>
    <ligand>
        <name>anthranilate</name>
        <dbReference type="ChEBI" id="CHEBI:16567"/>
        <label>1</label>
    </ligand>
</feature>
<feature type="binding site" evidence="1">
    <location>
        <begin position="87"/>
        <end position="88"/>
    </location>
    <ligand>
        <name>5-phospho-alpha-D-ribose 1-diphosphate</name>
        <dbReference type="ChEBI" id="CHEBI:58017"/>
    </ligand>
</feature>
<feature type="binding site" evidence="1">
    <location>
        <position position="92"/>
    </location>
    <ligand>
        <name>5-phospho-alpha-D-ribose 1-diphosphate</name>
        <dbReference type="ChEBI" id="CHEBI:58017"/>
    </ligand>
</feature>
<feature type="binding site" evidence="1">
    <location>
        <begin position="94"/>
        <end position="97"/>
    </location>
    <ligand>
        <name>5-phospho-alpha-D-ribose 1-diphosphate</name>
        <dbReference type="ChEBI" id="CHEBI:58017"/>
    </ligand>
</feature>
<feature type="binding site" evidence="1">
    <location>
        <position position="96"/>
    </location>
    <ligand>
        <name>Mg(2+)</name>
        <dbReference type="ChEBI" id="CHEBI:18420"/>
        <label>1</label>
    </ligand>
</feature>
<feature type="binding site" evidence="1">
    <location>
        <begin position="112"/>
        <end position="120"/>
    </location>
    <ligand>
        <name>5-phospho-alpha-D-ribose 1-diphosphate</name>
        <dbReference type="ChEBI" id="CHEBI:58017"/>
    </ligand>
</feature>
<feature type="binding site" evidence="1">
    <location>
        <position position="124"/>
    </location>
    <ligand>
        <name>5-phospho-alpha-D-ribose 1-diphosphate</name>
        <dbReference type="ChEBI" id="CHEBI:58017"/>
    </ligand>
</feature>
<feature type="binding site" evidence="1">
    <location>
        <position position="170"/>
    </location>
    <ligand>
        <name>anthranilate</name>
        <dbReference type="ChEBI" id="CHEBI:16567"/>
        <label>2</label>
    </ligand>
</feature>
<feature type="binding site" evidence="1">
    <location>
        <position position="229"/>
    </location>
    <ligand>
        <name>Mg(2+)</name>
        <dbReference type="ChEBI" id="CHEBI:18420"/>
        <label>2</label>
    </ligand>
</feature>
<feature type="binding site" evidence="1">
    <location>
        <position position="230"/>
    </location>
    <ligand>
        <name>Mg(2+)</name>
        <dbReference type="ChEBI" id="CHEBI:18420"/>
        <label>1</label>
    </ligand>
</feature>
<feature type="binding site" evidence="1">
    <location>
        <position position="230"/>
    </location>
    <ligand>
        <name>Mg(2+)</name>
        <dbReference type="ChEBI" id="CHEBI:18420"/>
        <label>2</label>
    </ligand>
</feature>
<organism>
    <name type="scientific">Janthinobacterium sp. (strain Marseille)</name>
    <name type="common">Minibacterium massiliensis</name>
    <dbReference type="NCBI Taxonomy" id="375286"/>
    <lineage>
        <taxon>Bacteria</taxon>
        <taxon>Pseudomonadati</taxon>
        <taxon>Pseudomonadota</taxon>
        <taxon>Betaproteobacteria</taxon>
        <taxon>Burkholderiales</taxon>
        <taxon>Oxalobacteraceae</taxon>
        <taxon>Janthinobacterium</taxon>
    </lineage>
</organism>
<reference key="1">
    <citation type="journal article" date="2007" name="PLoS Genet.">
        <title>Genome analysis of Minibacterium massiliensis highlights the convergent evolution of water-living bacteria.</title>
        <authorList>
            <person name="Audic S."/>
            <person name="Robert C."/>
            <person name="Campagna B."/>
            <person name="Parinello H."/>
            <person name="Claverie J.-M."/>
            <person name="Raoult D."/>
            <person name="Drancourt M."/>
        </authorList>
    </citation>
    <scope>NUCLEOTIDE SEQUENCE [LARGE SCALE GENOMIC DNA]</scope>
    <source>
        <strain>Marseille</strain>
    </source>
</reference>
<comment type="function">
    <text evidence="1">Catalyzes the transfer of the phosphoribosyl group of 5-phosphorylribose-1-pyrophosphate (PRPP) to anthranilate to yield N-(5'-phosphoribosyl)-anthranilate (PRA).</text>
</comment>
<comment type="catalytic activity">
    <reaction evidence="1">
        <text>N-(5-phospho-beta-D-ribosyl)anthranilate + diphosphate = 5-phospho-alpha-D-ribose 1-diphosphate + anthranilate</text>
        <dbReference type="Rhea" id="RHEA:11768"/>
        <dbReference type="ChEBI" id="CHEBI:16567"/>
        <dbReference type="ChEBI" id="CHEBI:18277"/>
        <dbReference type="ChEBI" id="CHEBI:33019"/>
        <dbReference type="ChEBI" id="CHEBI:58017"/>
        <dbReference type="EC" id="2.4.2.18"/>
    </reaction>
</comment>
<comment type="cofactor">
    <cofactor evidence="1">
        <name>Mg(2+)</name>
        <dbReference type="ChEBI" id="CHEBI:18420"/>
    </cofactor>
    <text evidence="1">Binds 2 magnesium ions per monomer.</text>
</comment>
<comment type="pathway">
    <text evidence="1">Amino-acid biosynthesis; L-tryptophan biosynthesis; L-tryptophan from chorismate: step 2/5.</text>
</comment>
<comment type="subunit">
    <text evidence="1">Homodimer.</text>
</comment>
<comment type="similarity">
    <text evidence="1">Belongs to the anthranilate phosphoribosyltransferase family.</text>
</comment>
<accession>A6SUH6</accession>